<name>RL17_PSECP</name>
<feature type="chain" id="PRO_1000183995" description="Large ribosomal subunit protein bL17">
    <location>
        <begin position="1"/>
        <end position="190"/>
    </location>
</feature>
<feature type="region of interest" description="Disordered" evidence="2">
    <location>
        <begin position="135"/>
        <end position="190"/>
    </location>
</feature>
<feature type="compositionally biased region" description="Low complexity" evidence="2">
    <location>
        <begin position="135"/>
        <end position="165"/>
    </location>
</feature>
<keyword id="KW-0687">Ribonucleoprotein</keyword>
<keyword id="KW-0689">Ribosomal protein</keyword>
<dbReference type="EMBL" id="CP001341">
    <property type="protein sequence ID" value="ACL40619.1"/>
    <property type="molecule type" value="Genomic_DNA"/>
</dbReference>
<dbReference type="RefSeq" id="WP_015937828.1">
    <property type="nucleotide sequence ID" value="NC_011886.1"/>
</dbReference>
<dbReference type="SMR" id="B8HCX3"/>
<dbReference type="STRING" id="452863.Achl_2654"/>
<dbReference type="KEGG" id="ach:Achl_2654"/>
<dbReference type="eggNOG" id="COG0203">
    <property type="taxonomic scope" value="Bacteria"/>
</dbReference>
<dbReference type="HOGENOM" id="CLU_074407_0_0_11"/>
<dbReference type="OrthoDB" id="9809073at2"/>
<dbReference type="Proteomes" id="UP000002505">
    <property type="component" value="Chromosome"/>
</dbReference>
<dbReference type="GO" id="GO:0022625">
    <property type="term" value="C:cytosolic large ribosomal subunit"/>
    <property type="evidence" value="ECO:0007669"/>
    <property type="project" value="TreeGrafter"/>
</dbReference>
<dbReference type="GO" id="GO:0003735">
    <property type="term" value="F:structural constituent of ribosome"/>
    <property type="evidence" value="ECO:0007669"/>
    <property type="project" value="InterPro"/>
</dbReference>
<dbReference type="GO" id="GO:0006412">
    <property type="term" value="P:translation"/>
    <property type="evidence" value="ECO:0007669"/>
    <property type="project" value="UniProtKB-UniRule"/>
</dbReference>
<dbReference type="Gene3D" id="3.90.1030.10">
    <property type="entry name" value="Ribosomal protein L17"/>
    <property type="match status" value="1"/>
</dbReference>
<dbReference type="HAMAP" id="MF_01368">
    <property type="entry name" value="Ribosomal_bL17"/>
    <property type="match status" value="1"/>
</dbReference>
<dbReference type="InterPro" id="IPR000456">
    <property type="entry name" value="Ribosomal_bL17"/>
</dbReference>
<dbReference type="InterPro" id="IPR047859">
    <property type="entry name" value="Ribosomal_bL17_CS"/>
</dbReference>
<dbReference type="InterPro" id="IPR036373">
    <property type="entry name" value="Ribosomal_bL17_sf"/>
</dbReference>
<dbReference type="NCBIfam" id="TIGR00059">
    <property type="entry name" value="L17"/>
    <property type="match status" value="1"/>
</dbReference>
<dbReference type="PANTHER" id="PTHR14413:SF16">
    <property type="entry name" value="LARGE RIBOSOMAL SUBUNIT PROTEIN BL17M"/>
    <property type="match status" value="1"/>
</dbReference>
<dbReference type="PANTHER" id="PTHR14413">
    <property type="entry name" value="RIBOSOMAL PROTEIN L17"/>
    <property type="match status" value="1"/>
</dbReference>
<dbReference type="Pfam" id="PF01196">
    <property type="entry name" value="Ribosomal_L17"/>
    <property type="match status" value="1"/>
</dbReference>
<dbReference type="SUPFAM" id="SSF64263">
    <property type="entry name" value="Prokaryotic ribosomal protein L17"/>
    <property type="match status" value="1"/>
</dbReference>
<dbReference type="PROSITE" id="PS01167">
    <property type="entry name" value="RIBOSOMAL_L17"/>
    <property type="match status" value="1"/>
</dbReference>
<comment type="subunit">
    <text evidence="1">Part of the 50S ribosomal subunit. Contacts protein L32.</text>
</comment>
<comment type="similarity">
    <text evidence="1">Belongs to the bacterial ribosomal protein bL17 family.</text>
</comment>
<gene>
    <name evidence="1" type="primary">rplQ</name>
    <name type="ordered locus">Achl_2654</name>
</gene>
<proteinExistence type="inferred from homology"/>
<evidence type="ECO:0000255" key="1">
    <source>
        <dbReference type="HAMAP-Rule" id="MF_01368"/>
    </source>
</evidence>
<evidence type="ECO:0000256" key="2">
    <source>
        <dbReference type="SAM" id="MobiDB-lite"/>
    </source>
</evidence>
<evidence type="ECO:0000305" key="3"/>
<protein>
    <recommendedName>
        <fullName evidence="1">Large ribosomal subunit protein bL17</fullName>
    </recommendedName>
    <alternativeName>
        <fullName evidence="3">50S ribosomal protein L17</fullName>
    </alternativeName>
</protein>
<reference key="1">
    <citation type="submission" date="2009-01" db="EMBL/GenBank/DDBJ databases">
        <title>Complete sequence of chromosome of Arthrobacter chlorophenolicus A6.</title>
        <authorList>
            <consortium name="US DOE Joint Genome Institute"/>
            <person name="Lucas S."/>
            <person name="Copeland A."/>
            <person name="Lapidus A."/>
            <person name="Glavina del Rio T."/>
            <person name="Tice H."/>
            <person name="Bruce D."/>
            <person name="Goodwin L."/>
            <person name="Pitluck S."/>
            <person name="Goltsman E."/>
            <person name="Clum A."/>
            <person name="Larimer F."/>
            <person name="Land M."/>
            <person name="Hauser L."/>
            <person name="Kyrpides N."/>
            <person name="Mikhailova N."/>
            <person name="Jansson J."/>
            <person name="Richardson P."/>
        </authorList>
    </citation>
    <scope>NUCLEOTIDE SEQUENCE [LARGE SCALE GENOMIC DNA]</scope>
    <source>
        <strain>ATCC 700700 / DSM 12829 / CIP 107037 / JCM 12360 / KCTC 9906 / NCIMB 13794 / A6</strain>
    </source>
</reference>
<organism>
    <name type="scientific">Pseudarthrobacter chlorophenolicus (strain ATCC 700700 / DSM 12829 / CIP 107037 / JCM 12360 / KCTC 9906 / NCIMB 13794 / A6)</name>
    <name type="common">Arthrobacter chlorophenolicus</name>
    <dbReference type="NCBI Taxonomy" id="452863"/>
    <lineage>
        <taxon>Bacteria</taxon>
        <taxon>Bacillati</taxon>
        <taxon>Actinomycetota</taxon>
        <taxon>Actinomycetes</taxon>
        <taxon>Micrococcales</taxon>
        <taxon>Micrococcaceae</taxon>
        <taxon>Pseudarthrobacter</taxon>
    </lineage>
</organism>
<sequence>MPTPTKGPRLGGGPAHERLMLANLAAALFEHKRITTTVTKAKRLKPYAERLVTFAKRGDLASRRRVLGLISNKGVVHELFTDIAQAVENRDGGYTRITKIGNRKGDNAPMAVIELVLEPVSAKQAVVAEATQAAAKAAPAAEEAPAEEAPAAEEAATEEAPAAEETATEEAAAEEAPAAEEAPAEEKDAK</sequence>
<accession>B8HCX3</accession>